<evidence type="ECO:0000255" key="1">
    <source>
        <dbReference type="HAMAP-Rule" id="MF_01953"/>
    </source>
</evidence>
<evidence type="ECO:0000305" key="2"/>
<reference key="1">
    <citation type="journal article" date="1993" name="Mol. Microbiol.">
        <title>Cloning, expression and sequencing of Helicobacter felis urease genes.</title>
        <authorList>
            <person name="Ferrero R.L."/>
            <person name="Labigne A."/>
        </authorList>
    </citation>
    <scope>NUCLEOTIDE SEQUENCE [GENOMIC DNA]</scope>
    <source>
        <strain>ATCC 49179 / CCUG 28539 / NCTC 12436 / CS1</strain>
    </source>
</reference>
<reference key="2">
    <citation type="submission" date="2010-12" db="EMBL/GenBank/DDBJ databases">
        <title>Comparative whole genome analysis of the carcinogenic bacterial pathogen Helicobacter felis.</title>
        <authorList>
            <person name="Arnold A."/>
            <person name="Zigova Z."/>
            <person name="Lawley T."/>
            <person name="Falkow S."/>
            <person name="Bentley S."/>
            <person name="Aslett M."/>
            <person name="Muller A."/>
        </authorList>
    </citation>
    <scope>NUCLEOTIDE SEQUENCE [LARGE SCALE GENOMIC DNA]</scope>
    <source>
        <strain>ATCC 49179 / CCUG 28539 / NCTC 12436 / CS1</strain>
    </source>
</reference>
<reference key="3">
    <citation type="journal article" date="1992" name="Infect. Immun.">
        <title>Purification and characterization of the urease enzymes of Helicobacter species from humans and animals.</title>
        <authorList>
            <person name="Turbett G.R."/>
            <person name="Hoej P.B."/>
            <person name="Horne R."/>
            <person name="Mee B.J."/>
        </authorList>
    </citation>
    <scope>PROTEIN SEQUENCE OF 1-12</scope>
    <source>
        <strain>ATCC 49179 / CCUG 28539 / NCTC 12436 / CS1</strain>
    </source>
</reference>
<accession>Q08716</accession>
<accession>E7A955</accession>
<accession>Q9R3B3</accession>
<keyword id="KW-0963">Cytoplasm</keyword>
<keyword id="KW-0903">Direct protein sequencing</keyword>
<keyword id="KW-0378">Hydrolase</keyword>
<keyword id="KW-0479">Metal-binding</keyword>
<keyword id="KW-0533">Nickel</keyword>
<protein>
    <recommendedName>
        <fullName evidence="1">Urease subunit beta</fullName>
        <ecNumber evidence="1">3.5.1.5</ecNumber>
    </recommendedName>
    <alternativeName>
        <fullName evidence="1">Urea amidohydrolase subunit beta</fullName>
    </alternativeName>
</protein>
<sequence>MKKISRKEYVSMYGPTTGDRVRLGDTDLILEVEHDCTTYGEEIKFGGGKTIRDGMSQTNSPSSYELDLVLTNALIVDYTGIYKADIGIKDGKIAGIGKAGNKDMQDGVDNNLCVGPATEALAAEGLIVTAGGIDTHIHFISPQQIPTAFASGVTTMIGGGTGPADGTNATTITPGRANLKSMLRAAEEYAMNLGFLAKGNVSYEPSLRDQIEAGAIGFKIHEDWGSTPAAIHHCLNVADEYDVQVAIHTDTLNEAGCVEDTLEAIAGRTIHTFHTEGAGGGHAPDVIKMAGEFNILPASTNPTIPFTKNTEAEHMDMLMVCHHLDKSIKEDVQFADSRIRPQTIAAEDQLHDMGIFSITSSDSQAMGRVGEVITRTWQTADKNKKEFGRLKEEKGDNDNFRIKRYISKYTINPAIAHGISDYVGSVEVGKYADLVLWSPAFFGIKPNMIIKGGFIALSQMGDANASIPTPQPVYYREMFGHHGKNKFDTNITFVSQAAYKAGIKEELGLDRVVLPVKNCRNITKKDLKFNDVTAHIDVNPETYKVKVDGKEVTSKAADELSLAQLYNLF</sequence>
<comment type="catalytic activity">
    <reaction evidence="1">
        <text>urea + 2 H2O + H(+) = hydrogencarbonate + 2 NH4(+)</text>
        <dbReference type="Rhea" id="RHEA:20557"/>
        <dbReference type="ChEBI" id="CHEBI:15377"/>
        <dbReference type="ChEBI" id="CHEBI:15378"/>
        <dbReference type="ChEBI" id="CHEBI:16199"/>
        <dbReference type="ChEBI" id="CHEBI:17544"/>
        <dbReference type="ChEBI" id="CHEBI:28938"/>
        <dbReference type="EC" id="3.5.1.5"/>
    </reaction>
</comment>
<comment type="cofactor">
    <cofactor evidence="1">
        <name>Ni cation</name>
        <dbReference type="ChEBI" id="CHEBI:25516"/>
    </cofactor>
    <text evidence="1">Binds 2 nickel ions per subunit.</text>
</comment>
<comment type="pathway">
    <text evidence="1">Nitrogen metabolism; urea degradation; CO(2) and NH(3) from urea (urease route): step 1/1.</text>
</comment>
<comment type="subunit">
    <text evidence="1">Heterohexamer of 3 UreA (alpha) and 3 UreB (beta) subunits.</text>
</comment>
<comment type="subcellular location">
    <subcellularLocation>
        <location evidence="1">Cytoplasm</location>
    </subcellularLocation>
</comment>
<comment type="PTM">
    <text evidence="1">Carboxylation allows a single lysine to coordinate two nickel ions.</text>
</comment>
<comment type="similarity">
    <text evidence="1">Belongs to the metallo-dependent hydrolases superfamily. Urease alpha subunit family.</text>
</comment>
<comment type="caution">
    <text evidence="2">The orthologous protein is known as the alpha subunit (UreC) in most other bacteria.</text>
</comment>
<name>URE1_HELFC</name>
<organism>
    <name type="scientific">Helicobacter felis (strain ATCC 49179 / CCUG 28539 / NCTC 12436 / CS1)</name>
    <dbReference type="NCBI Taxonomy" id="936155"/>
    <lineage>
        <taxon>Bacteria</taxon>
        <taxon>Pseudomonadati</taxon>
        <taxon>Campylobacterota</taxon>
        <taxon>Epsilonproteobacteria</taxon>
        <taxon>Campylobacterales</taxon>
        <taxon>Helicobacteraceae</taxon>
        <taxon>Helicobacter</taxon>
    </lineage>
</organism>
<proteinExistence type="evidence at protein level"/>
<dbReference type="EC" id="3.5.1.5" evidence="1"/>
<dbReference type="EMBL" id="X69080">
    <property type="protein sequence ID" value="CAA48826.1"/>
    <property type="molecule type" value="Genomic_DNA"/>
</dbReference>
<dbReference type="EMBL" id="FQ670179">
    <property type="protein sequence ID" value="CBY83282.1"/>
    <property type="molecule type" value="Genomic_DNA"/>
</dbReference>
<dbReference type="PIR" id="C49215">
    <property type="entry name" value="C49215"/>
</dbReference>
<dbReference type="PIR" id="S35291">
    <property type="entry name" value="S35291"/>
</dbReference>
<dbReference type="RefSeq" id="WP_013469646.1">
    <property type="nucleotide sequence ID" value="NC_014810.2"/>
</dbReference>
<dbReference type="SMR" id="Q08716"/>
<dbReference type="STRING" id="936155.HFELIS_11980"/>
<dbReference type="MEROPS" id="M38.982"/>
<dbReference type="GeneID" id="36133721"/>
<dbReference type="KEGG" id="hfe:HFELIS_11980"/>
<dbReference type="eggNOG" id="COG0804">
    <property type="taxonomic scope" value="Bacteria"/>
</dbReference>
<dbReference type="HOGENOM" id="CLU_000980_0_0_7"/>
<dbReference type="OrthoDB" id="9802793at2"/>
<dbReference type="UniPathway" id="UPA00258">
    <property type="reaction ID" value="UER00370"/>
</dbReference>
<dbReference type="Proteomes" id="UP000007934">
    <property type="component" value="Chromosome"/>
</dbReference>
<dbReference type="GO" id="GO:0005737">
    <property type="term" value="C:cytoplasm"/>
    <property type="evidence" value="ECO:0007669"/>
    <property type="project" value="UniProtKB-SubCell"/>
</dbReference>
<dbReference type="GO" id="GO:0016151">
    <property type="term" value="F:nickel cation binding"/>
    <property type="evidence" value="ECO:0007669"/>
    <property type="project" value="UniProtKB-UniRule"/>
</dbReference>
<dbReference type="GO" id="GO:0009039">
    <property type="term" value="F:urease activity"/>
    <property type="evidence" value="ECO:0007669"/>
    <property type="project" value="UniProtKB-UniRule"/>
</dbReference>
<dbReference type="GO" id="GO:0043419">
    <property type="term" value="P:urea catabolic process"/>
    <property type="evidence" value="ECO:0007669"/>
    <property type="project" value="UniProtKB-UniRule"/>
</dbReference>
<dbReference type="CDD" id="cd00375">
    <property type="entry name" value="Urease_alpha"/>
    <property type="match status" value="1"/>
</dbReference>
<dbReference type="Gene3D" id="3.20.20.140">
    <property type="entry name" value="Metal-dependent hydrolases"/>
    <property type="match status" value="1"/>
</dbReference>
<dbReference type="Gene3D" id="2.30.40.10">
    <property type="entry name" value="Urease, subunit C, domain 1"/>
    <property type="match status" value="1"/>
</dbReference>
<dbReference type="HAMAP" id="MF_01953">
    <property type="entry name" value="Urease_alpha"/>
    <property type="match status" value="1"/>
</dbReference>
<dbReference type="InterPro" id="IPR006680">
    <property type="entry name" value="Amidohydro-rel"/>
</dbReference>
<dbReference type="InterPro" id="IPR011059">
    <property type="entry name" value="Metal-dep_hydrolase_composite"/>
</dbReference>
<dbReference type="InterPro" id="IPR032466">
    <property type="entry name" value="Metal_Hydrolase"/>
</dbReference>
<dbReference type="InterPro" id="IPR011612">
    <property type="entry name" value="Urease_alpha_N_dom"/>
</dbReference>
<dbReference type="InterPro" id="IPR050112">
    <property type="entry name" value="Urease_alpha_subunit"/>
</dbReference>
<dbReference type="InterPro" id="IPR017950">
    <property type="entry name" value="Urease_AS"/>
</dbReference>
<dbReference type="InterPro" id="IPR005848">
    <property type="entry name" value="Urease_asu"/>
</dbReference>
<dbReference type="InterPro" id="IPR017951">
    <property type="entry name" value="Urease_asu_c"/>
</dbReference>
<dbReference type="InterPro" id="IPR029754">
    <property type="entry name" value="Urease_Ni-bd"/>
</dbReference>
<dbReference type="NCBIfam" id="NF009686">
    <property type="entry name" value="PRK13207.1"/>
    <property type="match status" value="1"/>
</dbReference>
<dbReference type="NCBIfam" id="NF010591">
    <property type="entry name" value="PRK13985.1"/>
    <property type="match status" value="1"/>
</dbReference>
<dbReference type="NCBIfam" id="TIGR01792">
    <property type="entry name" value="urease_alph"/>
    <property type="match status" value="1"/>
</dbReference>
<dbReference type="PANTHER" id="PTHR43440">
    <property type="entry name" value="UREASE"/>
    <property type="match status" value="1"/>
</dbReference>
<dbReference type="PANTHER" id="PTHR43440:SF1">
    <property type="entry name" value="UREASE"/>
    <property type="match status" value="1"/>
</dbReference>
<dbReference type="Pfam" id="PF01979">
    <property type="entry name" value="Amidohydro_1"/>
    <property type="match status" value="1"/>
</dbReference>
<dbReference type="Pfam" id="PF00449">
    <property type="entry name" value="Urease_alpha"/>
    <property type="match status" value="1"/>
</dbReference>
<dbReference type="PRINTS" id="PR01752">
    <property type="entry name" value="UREASE"/>
</dbReference>
<dbReference type="SUPFAM" id="SSF51338">
    <property type="entry name" value="Composite domain of metallo-dependent hydrolases"/>
    <property type="match status" value="2"/>
</dbReference>
<dbReference type="SUPFAM" id="SSF51556">
    <property type="entry name" value="Metallo-dependent hydrolases"/>
    <property type="match status" value="1"/>
</dbReference>
<dbReference type="PROSITE" id="PS01120">
    <property type="entry name" value="UREASE_1"/>
    <property type="match status" value="1"/>
</dbReference>
<dbReference type="PROSITE" id="PS00145">
    <property type="entry name" value="UREASE_2"/>
    <property type="match status" value="1"/>
</dbReference>
<dbReference type="PROSITE" id="PS51368">
    <property type="entry name" value="UREASE_3"/>
    <property type="match status" value="1"/>
</dbReference>
<feature type="chain" id="PRO_0000067530" description="Urease subunit beta">
    <location>
        <begin position="1"/>
        <end position="569"/>
    </location>
</feature>
<feature type="domain" description="Urease" evidence="1">
    <location>
        <begin position="131"/>
        <end position="569"/>
    </location>
</feature>
<feature type="active site" description="Proton donor" evidence="1">
    <location>
        <position position="322"/>
    </location>
</feature>
<feature type="binding site" evidence="1">
    <location>
        <position position="136"/>
    </location>
    <ligand>
        <name>Ni(2+)</name>
        <dbReference type="ChEBI" id="CHEBI:49786"/>
        <label>1</label>
    </ligand>
</feature>
<feature type="binding site" evidence="1">
    <location>
        <position position="138"/>
    </location>
    <ligand>
        <name>Ni(2+)</name>
        <dbReference type="ChEBI" id="CHEBI:49786"/>
        <label>1</label>
    </ligand>
</feature>
<feature type="binding site" description="via carbamate group" evidence="1">
    <location>
        <position position="219"/>
    </location>
    <ligand>
        <name>Ni(2+)</name>
        <dbReference type="ChEBI" id="CHEBI:49786"/>
        <label>1</label>
    </ligand>
</feature>
<feature type="binding site" description="via carbamate group" evidence="1">
    <location>
        <position position="219"/>
    </location>
    <ligand>
        <name>Ni(2+)</name>
        <dbReference type="ChEBI" id="CHEBI:49786"/>
        <label>2</label>
    </ligand>
</feature>
<feature type="binding site" evidence="1">
    <location>
        <position position="221"/>
    </location>
    <ligand>
        <name>substrate</name>
    </ligand>
</feature>
<feature type="binding site" evidence="1">
    <location>
        <position position="248"/>
    </location>
    <ligand>
        <name>Ni(2+)</name>
        <dbReference type="ChEBI" id="CHEBI:49786"/>
        <label>2</label>
    </ligand>
</feature>
<feature type="binding site" evidence="1">
    <location>
        <position position="274"/>
    </location>
    <ligand>
        <name>Ni(2+)</name>
        <dbReference type="ChEBI" id="CHEBI:49786"/>
        <label>2</label>
    </ligand>
</feature>
<feature type="binding site" evidence="1">
    <location>
        <position position="362"/>
    </location>
    <ligand>
        <name>Ni(2+)</name>
        <dbReference type="ChEBI" id="CHEBI:49786"/>
        <label>1</label>
    </ligand>
</feature>
<feature type="modified residue" description="N6-carboxylysine" evidence="1">
    <location>
        <position position="219"/>
    </location>
</feature>
<feature type="sequence conflict" description="In Ref. 1; CAA48826." evidence="2" ref="1">
    <original>A</original>
    <variation>G</variation>
    <location>
        <position position="414"/>
    </location>
</feature>
<feature type="sequence conflict" description="In Ref. 1; CAA48826." evidence="2" ref="1">
    <original>VVL</original>
    <variation>AAP</variation>
    <location>
        <begin position="512"/>
        <end position="514"/>
    </location>
</feature>
<gene>
    <name evidence="1" type="primary">ureB</name>
    <name type="ordered locus">Hfelis_11980</name>
</gene>